<protein>
    <recommendedName>
        <fullName evidence="1">Large ribosomal subunit protein uL1</fullName>
    </recommendedName>
    <alternativeName>
        <fullName evidence="2">50S ribosomal protein L1</fullName>
    </alternativeName>
</protein>
<name>RL1_THEPD</name>
<sequence>MSSQTLVAAGSLEEAIKEALVSSPKKRRFTQSVEMIVTLRDVDVKKPENRLNTVVALPHPAPGKLAKVAVIASGDTALKAKEAGADIVVDKDELQKIGNDKKAAKKLAKRYDFFLAQPDLMPLVGRVLGKYLGPRGKMPQPIPPNVALDALIERFRRSVRIRMKDEPQIACRIGVETQPVEHLAENARAVLAEILKKFPPPNIDRIYFKLTMGRPVKVSREVVRK</sequence>
<reference key="1">
    <citation type="journal article" date="2008" name="J. Bacteriol.">
        <title>Genome sequence of Thermofilum pendens reveals an exceptional loss of biosynthetic pathways without genome reduction.</title>
        <authorList>
            <person name="Anderson I."/>
            <person name="Rodriguez J."/>
            <person name="Susanti D."/>
            <person name="Porat I."/>
            <person name="Reich C."/>
            <person name="Ulrich L.E."/>
            <person name="Elkins J.G."/>
            <person name="Mavromatis K."/>
            <person name="Lykidis A."/>
            <person name="Kim E."/>
            <person name="Thompson L.S."/>
            <person name="Nolan M."/>
            <person name="Land M."/>
            <person name="Copeland A."/>
            <person name="Lapidus A."/>
            <person name="Lucas S."/>
            <person name="Detter C."/>
            <person name="Zhulin I.B."/>
            <person name="Olsen G.J."/>
            <person name="Whitman W."/>
            <person name="Mukhopadhyay B."/>
            <person name="Bristow J."/>
            <person name="Kyrpides N."/>
        </authorList>
    </citation>
    <scope>NUCLEOTIDE SEQUENCE [LARGE SCALE GENOMIC DNA]</scope>
    <source>
        <strain>DSM 2475 / Hrk 5</strain>
    </source>
</reference>
<organism>
    <name type="scientific">Thermofilum pendens (strain DSM 2475 / Hrk 5)</name>
    <dbReference type="NCBI Taxonomy" id="368408"/>
    <lineage>
        <taxon>Archaea</taxon>
        <taxon>Thermoproteota</taxon>
        <taxon>Thermoprotei</taxon>
        <taxon>Thermofilales</taxon>
        <taxon>Thermofilaceae</taxon>
        <taxon>Thermofilum</taxon>
    </lineage>
</organism>
<proteinExistence type="inferred from homology"/>
<keyword id="KW-1185">Reference proteome</keyword>
<keyword id="KW-0678">Repressor</keyword>
<keyword id="KW-0687">Ribonucleoprotein</keyword>
<keyword id="KW-0689">Ribosomal protein</keyword>
<keyword id="KW-0694">RNA-binding</keyword>
<keyword id="KW-0699">rRNA-binding</keyword>
<keyword id="KW-0810">Translation regulation</keyword>
<keyword id="KW-0820">tRNA-binding</keyword>
<evidence type="ECO:0000255" key="1">
    <source>
        <dbReference type="HAMAP-Rule" id="MF_01318"/>
    </source>
</evidence>
<evidence type="ECO:0000305" key="2"/>
<gene>
    <name evidence="1" type="primary">rpl1</name>
    <name type="ordered locus">Tpen_0223</name>
</gene>
<comment type="function">
    <text evidence="1">Binds directly to 23S rRNA. Probably involved in E site tRNA release.</text>
</comment>
<comment type="function">
    <text evidence="1">Protein L1 is also a translational repressor protein, it controls the translation of its operon by binding to its mRNA.</text>
</comment>
<comment type="subunit">
    <text evidence="1">Part of the 50S ribosomal subunit.</text>
</comment>
<comment type="similarity">
    <text evidence="1">Belongs to the universal ribosomal protein uL1 family.</text>
</comment>
<feature type="chain" id="PRO_0000308156" description="Large ribosomal subunit protein uL1">
    <location>
        <begin position="1"/>
        <end position="225"/>
    </location>
</feature>
<accession>A1RWQ3</accession>
<dbReference type="EMBL" id="CP000505">
    <property type="protein sequence ID" value="ABL77633.1"/>
    <property type="molecule type" value="Genomic_DNA"/>
</dbReference>
<dbReference type="RefSeq" id="WP_011751898.1">
    <property type="nucleotide sequence ID" value="NC_008698.1"/>
</dbReference>
<dbReference type="SMR" id="A1RWQ3"/>
<dbReference type="STRING" id="368408.Tpen_0223"/>
<dbReference type="EnsemblBacteria" id="ABL77633">
    <property type="protein sequence ID" value="ABL77633"/>
    <property type="gene ID" value="Tpen_0223"/>
</dbReference>
<dbReference type="GeneID" id="4601213"/>
<dbReference type="KEGG" id="tpe:Tpen_0223"/>
<dbReference type="eggNOG" id="arCOG04289">
    <property type="taxonomic scope" value="Archaea"/>
</dbReference>
<dbReference type="HOGENOM" id="CLU_062853_4_0_2"/>
<dbReference type="OrthoDB" id="10382at2157"/>
<dbReference type="Proteomes" id="UP000000641">
    <property type="component" value="Chromosome"/>
</dbReference>
<dbReference type="GO" id="GO:0015934">
    <property type="term" value="C:large ribosomal subunit"/>
    <property type="evidence" value="ECO:0007669"/>
    <property type="project" value="InterPro"/>
</dbReference>
<dbReference type="GO" id="GO:0019843">
    <property type="term" value="F:rRNA binding"/>
    <property type="evidence" value="ECO:0007669"/>
    <property type="project" value="UniProtKB-UniRule"/>
</dbReference>
<dbReference type="GO" id="GO:0003735">
    <property type="term" value="F:structural constituent of ribosome"/>
    <property type="evidence" value="ECO:0007669"/>
    <property type="project" value="InterPro"/>
</dbReference>
<dbReference type="GO" id="GO:0000049">
    <property type="term" value="F:tRNA binding"/>
    <property type="evidence" value="ECO:0007669"/>
    <property type="project" value="UniProtKB-KW"/>
</dbReference>
<dbReference type="GO" id="GO:0006417">
    <property type="term" value="P:regulation of translation"/>
    <property type="evidence" value="ECO:0007669"/>
    <property type="project" value="UniProtKB-KW"/>
</dbReference>
<dbReference type="GO" id="GO:0006412">
    <property type="term" value="P:translation"/>
    <property type="evidence" value="ECO:0007669"/>
    <property type="project" value="UniProtKB-UniRule"/>
</dbReference>
<dbReference type="CDD" id="cd00403">
    <property type="entry name" value="Ribosomal_L1"/>
    <property type="match status" value="1"/>
</dbReference>
<dbReference type="FunFam" id="3.40.50.790:FF:000005">
    <property type="entry name" value="50S ribosomal protein L1"/>
    <property type="match status" value="1"/>
</dbReference>
<dbReference type="Gene3D" id="3.30.190.20">
    <property type="match status" value="1"/>
</dbReference>
<dbReference type="Gene3D" id="3.40.50.790">
    <property type="match status" value="1"/>
</dbReference>
<dbReference type="HAMAP" id="MF_01318_A">
    <property type="entry name" value="Ribosomal_uL1_A"/>
    <property type="match status" value="1"/>
</dbReference>
<dbReference type="InterPro" id="IPR002143">
    <property type="entry name" value="Ribosomal_uL1"/>
</dbReference>
<dbReference type="InterPro" id="IPR023674">
    <property type="entry name" value="Ribosomal_uL1-like"/>
</dbReference>
<dbReference type="InterPro" id="IPR028364">
    <property type="entry name" value="Ribosomal_uL1/biogenesis"/>
</dbReference>
<dbReference type="InterPro" id="IPR016095">
    <property type="entry name" value="Ribosomal_uL1_3-a/b-sand"/>
</dbReference>
<dbReference type="InterPro" id="IPR023669">
    <property type="entry name" value="Ribosomal_uL1_arc"/>
</dbReference>
<dbReference type="InterPro" id="IPR023673">
    <property type="entry name" value="Ribosomal_uL1_CS"/>
</dbReference>
<dbReference type="NCBIfam" id="NF003244">
    <property type="entry name" value="PRK04203.1"/>
    <property type="match status" value="1"/>
</dbReference>
<dbReference type="PANTHER" id="PTHR36427">
    <property type="entry name" value="54S RIBOSOMAL PROTEIN L1, MITOCHONDRIAL"/>
    <property type="match status" value="1"/>
</dbReference>
<dbReference type="PANTHER" id="PTHR36427:SF3">
    <property type="entry name" value="LARGE RIBOSOMAL SUBUNIT PROTEIN UL1M"/>
    <property type="match status" value="1"/>
</dbReference>
<dbReference type="Pfam" id="PF00687">
    <property type="entry name" value="Ribosomal_L1"/>
    <property type="match status" value="1"/>
</dbReference>
<dbReference type="PIRSF" id="PIRSF002155">
    <property type="entry name" value="Ribosomal_L1"/>
    <property type="match status" value="1"/>
</dbReference>
<dbReference type="SUPFAM" id="SSF56808">
    <property type="entry name" value="Ribosomal protein L1"/>
    <property type="match status" value="1"/>
</dbReference>
<dbReference type="PROSITE" id="PS01199">
    <property type="entry name" value="RIBOSOMAL_L1"/>
    <property type="match status" value="1"/>
</dbReference>